<reference key="1">
    <citation type="journal article" date="2021" name="Nat. Commun.">
        <title>C-Glycoside metabolism in the gut and in nature: Identification, characterization, structural analyses and distribution of C-C bond-cleaving enzymes.</title>
        <authorList>
            <person name="Mori T."/>
            <person name="Kumano T."/>
            <person name="He H."/>
            <person name="Watanabe S."/>
            <person name="Senda M."/>
            <person name="Moriya T."/>
            <person name="Adachi N."/>
            <person name="Hori S."/>
            <person name="Terashita Y."/>
            <person name="Kawasaki M."/>
            <person name="Hashimoto Y."/>
            <person name="Awakawa T."/>
            <person name="Senda T."/>
            <person name="Abe I."/>
            <person name="Kobayashi M."/>
        </authorList>
    </citation>
    <scope>NUCLEOTIDE SEQUENCE [GENOMIC DNA]</scope>
    <scope>FUNCTION</scope>
    <scope>CATALYTIC ACTIVITY</scope>
    <scope>COFACTOR</scope>
    <scope>ACTIVITY REGULATION</scope>
    <scope>BIOPHYSICOCHEMICAL PROPERTIES</scope>
    <scope>SUBUNIT</scope>
    <scope>MUTAGENESIS OF GLU-145; HIS-147; HIS-275; GLU-311 AND GLU-313</scope>
    <source>
        <strain>5-2b</strain>
    </source>
</reference>
<name>CGDA_MICSX</name>
<comment type="function">
    <text evidence="2">Carbon-carbon bond-cleaving enzyme which participates in a carminate degradation pathway (PubMed:34728636). Cleaves the C-C bond in 3'-dehydrocarminate to form kermesate (PubMed:34728636). Also shows weak activity with other C-glycosides, such as 3''-dehydropuerarin (3''-oxo-puerarin), 3''-dehydroisoorientin (3''-oxo-homoorientin) and 3'-dehydromangiferin (3'-oxo-mangiferin) (PubMed:34728636).</text>
</comment>
<comment type="catalytic activity">
    <reaction evidence="2">
        <text>3'-dehydrocarminate + H(+) = kermesate + 1,5-anhydro-D-erythro-hex-1-en-3-ulose</text>
        <dbReference type="Rhea" id="RHEA:76567"/>
        <dbReference type="ChEBI" id="CHEBI:15378"/>
        <dbReference type="ChEBI" id="CHEBI:149530"/>
        <dbReference type="ChEBI" id="CHEBI:192513"/>
        <dbReference type="ChEBI" id="CHEBI:195275"/>
        <dbReference type="EC" id="4.1.99.28"/>
    </reaction>
</comment>
<comment type="cofactor">
    <cofactor evidence="2">
        <name>Mg(2+)</name>
        <dbReference type="ChEBI" id="CHEBI:18420"/>
    </cofactor>
</comment>
<comment type="activity regulation">
    <text evidence="2">Activity is strongly reduced in the presence of chelating agents.</text>
</comment>
<comment type="biophysicochemical properties">
    <kinetics>
        <KM evidence="2">0.39 mM for 3'-dehydrocarminate</KM>
        <KM evidence="2">7.5 mM for 3''-dehydropuerarin</KM>
        <KM evidence="2">11 mM for 3''-dehydroisoorientin</KM>
        <KM evidence="2">5.4 mM for 3'-dehydromangiferin</KM>
        <text evidence="2">kcat is 23 min(-1) with 3'-dehydrocarminate as substrate. kcat is 0.12 min(-1) with 3''-dehydropuerarin as substrate. kcat is 0.024 min(-1) with 3''-dehydroisoorientin as substrate. kcat is 0.16 min(-1) with 3'-dehydromangiferin as substrate.</text>
    </kinetics>
    <phDependence>
        <text evidence="2">Optimum pH is 7.5.</text>
    </phDependence>
    <temperatureDependence>
        <text evidence="2">Optimum temperature is around 40 degrees Celsius.</text>
    </temperatureDependence>
</comment>
<comment type="subunit">
    <text evidence="2">Heterodimer composed of an alpha subunit (CarB) and a beta subunit (CarC).</text>
</comment>
<comment type="similarity">
    <text evidence="4">Belongs to the C-glycoside deglycosidase alpha subunit family.</text>
</comment>
<feature type="chain" id="PRO_0000461026" description="3'-dehydrocarminate deglycosidase alpha subunit">
    <location>
        <begin position="1"/>
        <end position="348"/>
    </location>
</feature>
<feature type="active site" description="Proton acceptor" evidence="1">
    <location>
        <position position="147"/>
    </location>
</feature>
<feature type="binding site" evidence="1">
    <location>
        <position position="145"/>
    </location>
    <ligand>
        <name>Mg(2+)</name>
        <dbReference type="ChEBI" id="CHEBI:18420"/>
    </ligand>
</feature>
<feature type="binding site" evidence="1">
    <location>
        <position position="177"/>
    </location>
    <ligand>
        <name>Mg(2+)</name>
        <dbReference type="ChEBI" id="CHEBI:18420"/>
    </ligand>
</feature>
<feature type="binding site" evidence="1">
    <location>
        <position position="275"/>
    </location>
    <ligand>
        <name>Mg(2+)</name>
        <dbReference type="ChEBI" id="CHEBI:18420"/>
    </ligand>
</feature>
<feature type="binding site" evidence="1">
    <location>
        <position position="311"/>
    </location>
    <ligand>
        <name>Mg(2+)</name>
        <dbReference type="ChEBI" id="CHEBI:18420"/>
    </ligand>
</feature>
<feature type="mutagenesis site" description="Almost loss of activity." evidence="2">
    <original>E</original>
    <variation>A</variation>
    <location>
        <position position="145"/>
    </location>
</feature>
<feature type="mutagenesis site" description="Almost loss of activity." evidence="2">
    <original>H</original>
    <variation>A</variation>
    <location>
        <position position="147"/>
    </location>
</feature>
<feature type="mutagenesis site" description="Loss of activity." evidence="2">
    <original>H</original>
    <variation>A</variation>
    <location>
        <position position="275"/>
    </location>
</feature>
<feature type="mutagenesis site" description="Almost loss of activity." evidence="2">
    <original>E</original>
    <variation>A</variation>
    <location>
        <position position="311"/>
    </location>
</feature>
<feature type="mutagenesis site" description="Almost loss of activity." evidence="2">
    <original>E</original>
    <variation>A</variation>
    <location>
        <position position="313"/>
    </location>
</feature>
<keyword id="KW-0119">Carbohydrate metabolism</keyword>
<keyword id="KW-0456">Lyase</keyword>
<keyword id="KW-0460">Magnesium</keyword>
<keyword id="KW-0479">Metal-binding</keyword>
<dbReference type="EC" id="4.1.99.28" evidence="2"/>
<dbReference type="EMBL" id="LC387599">
    <property type="protein sequence ID" value="BBE36491.1"/>
    <property type="molecule type" value="Genomic_DNA"/>
</dbReference>
<dbReference type="SMR" id="P0DXE5"/>
<dbReference type="KEGG" id="ag:BBE36491"/>
<dbReference type="GO" id="GO:0016829">
    <property type="term" value="F:lyase activity"/>
    <property type="evidence" value="ECO:0007669"/>
    <property type="project" value="UniProtKB-KW"/>
</dbReference>
<dbReference type="GO" id="GO:0046872">
    <property type="term" value="F:metal ion binding"/>
    <property type="evidence" value="ECO:0007669"/>
    <property type="project" value="UniProtKB-KW"/>
</dbReference>
<dbReference type="Gene3D" id="3.20.20.150">
    <property type="entry name" value="Divalent-metal-dependent TIM barrel enzymes"/>
    <property type="match status" value="1"/>
</dbReference>
<dbReference type="InterPro" id="IPR036237">
    <property type="entry name" value="Xyl_isomerase-like_sf"/>
</dbReference>
<dbReference type="SUPFAM" id="SSF51658">
    <property type="entry name" value="Xylose isomerase-like"/>
    <property type="match status" value="1"/>
</dbReference>
<evidence type="ECO:0000250" key="1">
    <source>
        <dbReference type="UniProtKB" id="H0QPL9"/>
    </source>
</evidence>
<evidence type="ECO:0000269" key="2">
    <source>
    </source>
</evidence>
<evidence type="ECO:0000303" key="3">
    <source>
    </source>
</evidence>
<evidence type="ECO:0000305" key="4"/>
<proteinExistence type="evidence at protein level"/>
<protein>
    <recommendedName>
        <fullName evidence="4">3'-dehydrocarminate deglycosidase alpha subunit</fullName>
        <ecNumber evidence="2">4.1.99.28</ecNumber>
    </recommendedName>
    <alternativeName>
        <fullName evidence="3">C-deglycosylation enzyme alpha subunit</fullName>
    </alternativeName>
    <alternativeName>
        <fullName evidence="3">C-glycoside deglycosidase alpha subunit</fullName>
        <shortName evidence="3">CGD alpha subunit</shortName>
    </alternativeName>
    <alternativeName>
        <fullName evidence="3">MiCGD alpha</fullName>
    </alternativeName>
</protein>
<sequence length="348" mass="39400">MTALALPRLGVTLYSFTPYYHAREYSFEDLIRIAGERDLGPGLEIVGYQSIKGFPKLPDGFVKDFRRRVDEAGLELSAMGANADAGIPHDRLLNEDELTEYMAHQLHTAKELGFPIVRVQHSVTPDLMERLLPLAEKLDLTMGMEIHSPHSVHHPKIQALVERYEKLGSPHLGFIPDWGASLTRLPPSALQTYAAADVPRELLDAYDRQWDVFHAEGVITTDAEQGAQFRRMRELNERFGGDDVSVRIGTNAVGLFGHQRPEDWSAIMPWVVHVHGKFYGIDENGEEPSVPHGLLLRQLVDAGYTGYISSEWEGWHWNTTDDPFEMVAWQHRLMRRIFGEIEAEAGVR</sequence>
<organism>
    <name type="scientific">Microbacterium sp</name>
    <dbReference type="NCBI Taxonomy" id="51671"/>
    <lineage>
        <taxon>Bacteria</taxon>
        <taxon>Bacillati</taxon>
        <taxon>Actinomycetota</taxon>
        <taxon>Actinomycetes</taxon>
        <taxon>Micrococcales</taxon>
        <taxon>Microbacteriaceae</taxon>
        <taxon>Microbacterium</taxon>
    </lineage>
</organism>
<gene>
    <name evidence="3" type="primary">carB</name>
</gene>
<accession>P0DXE5</accession>